<evidence type="ECO:0000255" key="1">
    <source>
        <dbReference type="HAMAP-Rule" id="MF_01241"/>
    </source>
</evidence>
<proteinExistence type="inferred from homology"/>
<protein>
    <recommendedName>
        <fullName evidence="1">Glucosamine-6-phosphate deaminase</fullName>
        <ecNumber evidence="1">3.5.99.6</ecNumber>
    </recommendedName>
    <alternativeName>
        <fullName evidence="1">GlcN6P deaminase</fullName>
        <shortName evidence="1">GNPDA</shortName>
    </alternativeName>
    <alternativeName>
        <fullName evidence="1">Glucosamine-6-phosphate isomerase</fullName>
    </alternativeName>
</protein>
<gene>
    <name evidence="1" type="primary">nagB</name>
    <name type="ordered locus">BCE_4121</name>
</gene>
<sequence length="262" mass="28971">MNILVVKTPEELAEAGYKLIEEVVKTKENPTLGMATGSSPLGIYAEMRKNKLDTSRVTTVNLDEYVNLPHEDKNSYHYFMQEQLFDHLPFKQTYVPNGMASDLEEECKRYEGILAANPVDLQILGIGENGHIGFNEPGTPFNSPTNIVELTESTRQANLRFFEKEEDVPTHAITMGIGSIMKAKQILLVAMGSKKAEAVKELLQGAYSEACPATVLQRHPNVTVIADQEALSLCSEAIADEHRQVFTISDLLSDSRVGETAN</sequence>
<feature type="chain" id="PRO_1000066955" description="Glucosamine-6-phosphate deaminase">
    <location>
        <begin position="1"/>
        <end position="262"/>
    </location>
</feature>
<feature type="active site" description="Proton acceptor; for enolization step" evidence="1">
    <location>
        <position position="63"/>
    </location>
</feature>
<feature type="active site" description="For ring-opening step" evidence="1">
    <location>
        <position position="129"/>
    </location>
</feature>
<feature type="active site" description="Proton acceptor; for ring-opening step" evidence="1">
    <location>
        <position position="131"/>
    </location>
</feature>
<feature type="active site" description="For ring-opening step" evidence="1">
    <location>
        <position position="136"/>
    </location>
</feature>
<accession>Q731P4</accession>
<dbReference type="EC" id="3.5.99.6" evidence="1"/>
<dbReference type="EMBL" id="AE017194">
    <property type="protein sequence ID" value="AAS43023.1"/>
    <property type="molecule type" value="Genomic_DNA"/>
</dbReference>
<dbReference type="SMR" id="Q731P4"/>
<dbReference type="KEGG" id="bca:BCE_4121"/>
<dbReference type="HOGENOM" id="CLU_049611_1_0_9"/>
<dbReference type="UniPathway" id="UPA00629">
    <property type="reaction ID" value="UER00684"/>
</dbReference>
<dbReference type="Proteomes" id="UP000002527">
    <property type="component" value="Chromosome"/>
</dbReference>
<dbReference type="GO" id="GO:0005737">
    <property type="term" value="C:cytoplasm"/>
    <property type="evidence" value="ECO:0007669"/>
    <property type="project" value="TreeGrafter"/>
</dbReference>
<dbReference type="GO" id="GO:0004342">
    <property type="term" value="F:glucosamine-6-phosphate deaminase activity"/>
    <property type="evidence" value="ECO:0007669"/>
    <property type="project" value="UniProtKB-UniRule"/>
</dbReference>
<dbReference type="GO" id="GO:0042802">
    <property type="term" value="F:identical protein binding"/>
    <property type="evidence" value="ECO:0007669"/>
    <property type="project" value="TreeGrafter"/>
</dbReference>
<dbReference type="GO" id="GO:0005975">
    <property type="term" value="P:carbohydrate metabolic process"/>
    <property type="evidence" value="ECO:0007669"/>
    <property type="project" value="InterPro"/>
</dbReference>
<dbReference type="GO" id="GO:0006043">
    <property type="term" value="P:glucosamine catabolic process"/>
    <property type="evidence" value="ECO:0007669"/>
    <property type="project" value="TreeGrafter"/>
</dbReference>
<dbReference type="GO" id="GO:0006046">
    <property type="term" value="P:N-acetylglucosamine catabolic process"/>
    <property type="evidence" value="ECO:0007669"/>
    <property type="project" value="TreeGrafter"/>
</dbReference>
<dbReference type="GO" id="GO:0019262">
    <property type="term" value="P:N-acetylneuraminate catabolic process"/>
    <property type="evidence" value="ECO:0007669"/>
    <property type="project" value="UniProtKB-UniRule"/>
</dbReference>
<dbReference type="CDD" id="cd01399">
    <property type="entry name" value="GlcN6P_deaminase"/>
    <property type="match status" value="1"/>
</dbReference>
<dbReference type="FunFam" id="3.40.50.1360:FF:000003">
    <property type="entry name" value="Glucosamine-6-phosphate deaminase"/>
    <property type="match status" value="1"/>
</dbReference>
<dbReference type="Gene3D" id="3.40.50.1360">
    <property type="match status" value="1"/>
</dbReference>
<dbReference type="HAMAP" id="MF_01241">
    <property type="entry name" value="GlcN6P_deamin"/>
    <property type="match status" value="1"/>
</dbReference>
<dbReference type="InterPro" id="IPR006148">
    <property type="entry name" value="Glc/Gal-6P_isomerase"/>
</dbReference>
<dbReference type="InterPro" id="IPR004547">
    <property type="entry name" value="Glucosamine6P_isomerase"/>
</dbReference>
<dbReference type="InterPro" id="IPR018321">
    <property type="entry name" value="Glucosamine6P_isomerase_CS"/>
</dbReference>
<dbReference type="InterPro" id="IPR037171">
    <property type="entry name" value="NagB/RpiA_transferase-like"/>
</dbReference>
<dbReference type="NCBIfam" id="TIGR00502">
    <property type="entry name" value="nagB"/>
    <property type="match status" value="1"/>
</dbReference>
<dbReference type="NCBIfam" id="NF001682">
    <property type="entry name" value="PRK00443.1-1"/>
    <property type="match status" value="1"/>
</dbReference>
<dbReference type="PANTHER" id="PTHR11280">
    <property type="entry name" value="GLUCOSAMINE-6-PHOSPHATE ISOMERASE"/>
    <property type="match status" value="1"/>
</dbReference>
<dbReference type="PANTHER" id="PTHR11280:SF5">
    <property type="entry name" value="GLUCOSAMINE-6-PHOSPHATE ISOMERASE"/>
    <property type="match status" value="1"/>
</dbReference>
<dbReference type="Pfam" id="PF01182">
    <property type="entry name" value="Glucosamine_iso"/>
    <property type="match status" value="1"/>
</dbReference>
<dbReference type="SUPFAM" id="SSF100950">
    <property type="entry name" value="NagB/RpiA/CoA transferase-like"/>
    <property type="match status" value="1"/>
</dbReference>
<dbReference type="PROSITE" id="PS01161">
    <property type="entry name" value="GLC_GALNAC_ISOMERASE"/>
    <property type="match status" value="1"/>
</dbReference>
<organism>
    <name type="scientific">Bacillus cereus (strain ATCC 10987 / NRS 248)</name>
    <dbReference type="NCBI Taxonomy" id="222523"/>
    <lineage>
        <taxon>Bacteria</taxon>
        <taxon>Bacillati</taxon>
        <taxon>Bacillota</taxon>
        <taxon>Bacilli</taxon>
        <taxon>Bacillales</taxon>
        <taxon>Bacillaceae</taxon>
        <taxon>Bacillus</taxon>
        <taxon>Bacillus cereus group</taxon>
    </lineage>
</organism>
<comment type="function">
    <text evidence="1">Catalyzes the reversible isomerization-deamination of glucosamine 6-phosphate (GlcN6P) to form fructose 6-phosphate (Fru6P) and ammonium ion.</text>
</comment>
<comment type="catalytic activity">
    <reaction evidence="1">
        <text>alpha-D-glucosamine 6-phosphate + H2O = beta-D-fructose 6-phosphate + NH4(+)</text>
        <dbReference type="Rhea" id="RHEA:12172"/>
        <dbReference type="ChEBI" id="CHEBI:15377"/>
        <dbReference type="ChEBI" id="CHEBI:28938"/>
        <dbReference type="ChEBI" id="CHEBI:57634"/>
        <dbReference type="ChEBI" id="CHEBI:75989"/>
        <dbReference type="EC" id="3.5.99.6"/>
    </reaction>
</comment>
<comment type="pathway">
    <text evidence="1">Amino-sugar metabolism; N-acetylneuraminate degradation; D-fructose 6-phosphate from N-acetylneuraminate: step 5/5.</text>
</comment>
<comment type="similarity">
    <text evidence="1">Belongs to the glucosamine/galactosamine-6-phosphate isomerase family. NagB subfamily.</text>
</comment>
<keyword id="KW-0119">Carbohydrate metabolism</keyword>
<keyword id="KW-0378">Hydrolase</keyword>
<name>NAGB_BACC1</name>
<reference key="1">
    <citation type="journal article" date="2004" name="Nucleic Acids Res.">
        <title>The genome sequence of Bacillus cereus ATCC 10987 reveals metabolic adaptations and a large plasmid related to Bacillus anthracis pXO1.</title>
        <authorList>
            <person name="Rasko D.A."/>
            <person name="Ravel J."/>
            <person name="Oekstad O.A."/>
            <person name="Helgason E."/>
            <person name="Cer R.Z."/>
            <person name="Jiang L."/>
            <person name="Shores K.A."/>
            <person name="Fouts D.E."/>
            <person name="Tourasse N.J."/>
            <person name="Angiuoli S.V."/>
            <person name="Kolonay J.F."/>
            <person name="Nelson W.C."/>
            <person name="Kolstoe A.-B."/>
            <person name="Fraser C.M."/>
            <person name="Read T.D."/>
        </authorList>
    </citation>
    <scope>NUCLEOTIDE SEQUENCE [LARGE SCALE GENOMIC DNA]</scope>
    <source>
        <strain>ATCC 10987 / NRS 248</strain>
    </source>
</reference>